<evidence type="ECO:0000250" key="1">
    <source>
        <dbReference type="UniProtKB" id="Q9D708"/>
    </source>
</evidence>
<evidence type="ECO:0000255" key="2">
    <source>
        <dbReference type="PROSITE-ProRule" id="PRU00448"/>
    </source>
</evidence>
<evidence type="ECO:0000269" key="3">
    <source>
    </source>
</evidence>
<evidence type="ECO:0000269" key="4">
    <source>
    </source>
</evidence>
<evidence type="ECO:0000269" key="5">
    <source>
    </source>
</evidence>
<evidence type="ECO:0000303" key="6">
    <source>
    </source>
</evidence>
<evidence type="ECO:0000305" key="7"/>
<evidence type="ECO:0000305" key="8">
    <source>
    </source>
</evidence>
<evidence type="ECO:0000312" key="9">
    <source>
        <dbReference type="HGNC" id="HGNC:20441"/>
    </source>
</evidence>
<evidence type="ECO:0007829" key="10">
    <source>
        <dbReference type="PDB" id="2L50"/>
    </source>
</evidence>
<evidence type="ECO:0007829" key="11">
    <source>
        <dbReference type="PDB" id="2L51"/>
    </source>
</evidence>
<evidence type="ECO:0007829" key="12">
    <source>
        <dbReference type="PDB" id="3NXA"/>
    </source>
</evidence>
<sequence>MSDCYTELEKAVIVLVENFYKYVSKYSLVKNKISKSSFREMLQKELNHMLSDTGNRKAADKLIQNLDANHDGRISFDEYWTLIGGITGPIAKLIHEQEQQSSS</sequence>
<gene>
    <name evidence="9" type="primary">S100A16</name>
    <name type="synonym">S100F</name>
    <name type="ORF">AAG13</name>
</gene>
<feature type="chain" id="PRO_0000144023" description="Protein S100-A16">
    <location>
        <begin position="1"/>
        <end position="103"/>
    </location>
</feature>
<feature type="domain" description="EF-hand 1; degenerate" evidence="8">
    <location>
        <begin position="12"/>
        <end position="47"/>
    </location>
</feature>
<feature type="domain" description="EF-hand 2" evidence="2">
    <location>
        <begin position="54"/>
        <end position="89"/>
    </location>
</feature>
<feature type="binding site" evidence="2 6">
    <location>
        <position position="67"/>
    </location>
    <ligand>
        <name>Ca(2+)</name>
        <dbReference type="ChEBI" id="CHEBI:29108"/>
        <note>high affinity</note>
    </ligand>
</feature>
<feature type="binding site" evidence="2 6">
    <location>
        <position position="69"/>
    </location>
    <ligand>
        <name>Ca(2+)</name>
        <dbReference type="ChEBI" id="CHEBI:29108"/>
        <note>high affinity</note>
    </ligand>
</feature>
<feature type="binding site" evidence="2 6">
    <location>
        <position position="71"/>
    </location>
    <ligand>
        <name>Ca(2+)</name>
        <dbReference type="ChEBI" id="CHEBI:29108"/>
        <note>high affinity</note>
    </ligand>
</feature>
<feature type="binding site" evidence="2 6">
    <location>
        <position position="73"/>
    </location>
    <ligand>
        <name>Ca(2+)</name>
        <dbReference type="ChEBI" id="CHEBI:29108"/>
        <note>high affinity</note>
    </ligand>
</feature>
<feature type="binding site" evidence="2 6">
    <location>
        <position position="78"/>
    </location>
    <ligand>
        <name>Ca(2+)</name>
        <dbReference type="ChEBI" id="CHEBI:29108"/>
        <note>high affinity</note>
    </ligand>
</feature>
<feature type="helix" evidence="12">
    <location>
        <begin position="7"/>
        <end position="21"/>
    </location>
</feature>
<feature type="turn" evidence="10">
    <location>
        <begin position="28"/>
        <end position="30"/>
    </location>
</feature>
<feature type="helix" evidence="12">
    <location>
        <begin position="35"/>
        <end position="45"/>
    </location>
</feature>
<feature type="turn" evidence="12">
    <location>
        <begin position="47"/>
        <end position="50"/>
    </location>
</feature>
<feature type="strand" evidence="10">
    <location>
        <begin position="51"/>
        <end position="53"/>
    </location>
</feature>
<feature type="helix" evidence="12">
    <location>
        <begin position="54"/>
        <end position="65"/>
    </location>
</feature>
<feature type="helix" evidence="11">
    <location>
        <begin position="66"/>
        <end position="68"/>
    </location>
</feature>
<feature type="helix" evidence="12">
    <location>
        <begin position="76"/>
        <end position="87"/>
    </location>
</feature>
<feature type="helix" evidence="12">
    <location>
        <begin position="88"/>
        <end position="90"/>
    </location>
</feature>
<feature type="helix" evidence="12">
    <location>
        <begin position="91"/>
        <end position="100"/>
    </location>
</feature>
<comment type="function">
    <text evidence="1 4">Calcium-binding protein. Binds one calcium ion per monomer (PubMed:17030513). Can promote differentiation of adipocytes (in vitro) (By similarity). Overexpression in preadipocytes increases their proliferation, enhances adipogenesis and reduces insulin-stimulated glucose uptake (By similarity).</text>
</comment>
<comment type="subunit">
    <text evidence="1 4 5">Homodimer (PubMed:17030513, PubMed:21046186). Interacts with TP53 (By similarity).</text>
</comment>
<comment type="interaction">
    <interactant intactId="EBI-751850">
        <id>Q96FQ6</id>
    </interactant>
    <interactant intactId="EBI-751842">
        <id>Q9HCY8</id>
        <label>S100A14</label>
    </interactant>
    <organismsDiffer>false</organismsDiffer>
    <experiments>11</experiments>
</comment>
<comment type="subcellular location">
    <subcellularLocation>
        <location evidence="4">Nucleus</location>
        <location evidence="4">Nucleolus</location>
    </subcellularLocation>
    <subcellularLocation>
        <location evidence="4">Cytoplasm</location>
    </subcellularLocation>
    <text>Primarily nucleolar. A high intracellular calcium level induces nucleolar exit and nucleocytoplasmic transport, whereas a low intracellular calcium level leads to nuclear translocation and accumulation within specific region of nucleoli (PubMed:17030513).</text>
</comment>
<comment type="tissue specificity">
    <text evidence="3 4">Ubiquitous (PubMed:14684152). Highly expressed in esophagus, adipose tissues and colon. Expressed at lower level in lung, brain, pancreas and skeletal muscle. Expression is up-regulated in tumors of bladder, lung, thyroid gland, pancreas and ovary (PubMed:14684152). Expressed in astrocytes (PubMed:17030513).</text>
</comment>
<comment type="domain">
    <text evidence="4">S100A16 proteins, but not other S100 proteins, have only one functional Ca(2+) binding site per monomer. Upon Ca(2+) binding, undergoes conformational changes leading to the exposure of hydrophobic patches which could be implicated in the Ca(2+) -dependent nuclear export. Binds Zn(2+). Ca(2+) and Zn(2+) do not bind to the same site. Does not bind Cu(2+).</text>
</comment>
<comment type="similarity">
    <text evidence="7">Belongs to the S-100 family.</text>
</comment>
<name>S10AG_HUMAN</name>
<dbReference type="EMBL" id="AJ585980">
    <property type="protein sequence ID" value="CAE51865.1"/>
    <property type="molecule type" value="Genomic_DNA"/>
</dbReference>
<dbReference type="EMBL" id="AY221961">
    <property type="protein sequence ID" value="AAP46152.1"/>
    <property type="molecule type" value="mRNA"/>
</dbReference>
<dbReference type="EMBL" id="AY762098">
    <property type="protein sequence ID" value="AAW88319.1"/>
    <property type="molecule type" value="mRNA"/>
</dbReference>
<dbReference type="EMBL" id="AK290804">
    <property type="protein sequence ID" value="BAF83493.1"/>
    <property type="molecule type" value="mRNA"/>
</dbReference>
<dbReference type="EMBL" id="BX470102">
    <property type="status" value="NOT_ANNOTATED_CDS"/>
    <property type="molecule type" value="Genomic_DNA"/>
</dbReference>
<dbReference type="EMBL" id="CH471121">
    <property type="protein sequence ID" value="EAW53303.1"/>
    <property type="molecule type" value="Genomic_DNA"/>
</dbReference>
<dbReference type="EMBL" id="CH471121">
    <property type="protein sequence ID" value="EAW53304.1"/>
    <property type="molecule type" value="Genomic_DNA"/>
</dbReference>
<dbReference type="EMBL" id="BC010541">
    <property type="protein sequence ID" value="AAH10541.1"/>
    <property type="molecule type" value="mRNA"/>
</dbReference>
<dbReference type="EMBL" id="BC019099">
    <property type="protein sequence ID" value="AAH19099.1"/>
    <property type="molecule type" value="mRNA"/>
</dbReference>
<dbReference type="EMBL" id="BC095462">
    <property type="protein sequence ID" value="AAH95462.1"/>
    <property type="molecule type" value="mRNA"/>
</dbReference>
<dbReference type="CCDS" id="CCDS1045.1"/>
<dbReference type="RefSeq" id="NP_001303936.1">
    <property type="nucleotide sequence ID" value="NM_001317007.1"/>
</dbReference>
<dbReference type="RefSeq" id="NP_001303937.1">
    <property type="nucleotide sequence ID" value="NM_001317008.2"/>
</dbReference>
<dbReference type="RefSeq" id="NP_525127.1">
    <property type="nucleotide sequence ID" value="NM_080388.3"/>
</dbReference>
<dbReference type="RefSeq" id="XP_047302515.1">
    <property type="nucleotide sequence ID" value="XM_047446559.1"/>
</dbReference>
<dbReference type="RefSeq" id="XP_054190468.1">
    <property type="nucleotide sequence ID" value="XM_054334493.1"/>
</dbReference>
<dbReference type="PDB" id="2L50">
    <property type="method" value="NMR"/>
    <property type="chains" value="A/B=2-103"/>
</dbReference>
<dbReference type="PDB" id="2L51">
    <property type="method" value="NMR"/>
    <property type="chains" value="A/B=2-103"/>
</dbReference>
<dbReference type="PDB" id="3NXA">
    <property type="method" value="X-ray"/>
    <property type="resolution" value="2.10 A"/>
    <property type="chains" value="A/B/C/D=3-102"/>
</dbReference>
<dbReference type="PDBsum" id="2L50"/>
<dbReference type="PDBsum" id="2L51"/>
<dbReference type="PDBsum" id="3NXA"/>
<dbReference type="BMRB" id="Q96FQ6"/>
<dbReference type="SMR" id="Q96FQ6"/>
<dbReference type="BioGRID" id="126627">
    <property type="interactions" value="71"/>
</dbReference>
<dbReference type="FunCoup" id="Q96FQ6">
    <property type="interactions" value="330"/>
</dbReference>
<dbReference type="IntAct" id="Q96FQ6">
    <property type="interactions" value="26"/>
</dbReference>
<dbReference type="MINT" id="Q96FQ6"/>
<dbReference type="STRING" id="9606.ENSP00000357695"/>
<dbReference type="DrugBank" id="DB11093">
    <property type="generic name" value="Calcium citrate"/>
</dbReference>
<dbReference type="DrugBank" id="DB11348">
    <property type="generic name" value="Calcium Phosphate"/>
</dbReference>
<dbReference type="DrugBank" id="DB14481">
    <property type="generic name" value="Calcium phosphate dihydrate"/>
</dbReference>
<dbReference type="TCDB" id="8.A.81.1.3">
    <property type="family name" value="the s100 calcium-binding protein (s100) family"/>
</dbReference>
<dbReference type="GlyGen" id="Q96FQ6">
    <property type="glycosylation" value="1 site, 1 O-linked glycan (1 site)"/>
</dbReference>
<dbReference type="iPTMnet" id="Q96FQ6"/>
<dbReference type="MetOSite" id="Q96FQ6"/>
<dbReference type="PhosphoSitePlus" id="Q96FQ6"/>
<dbReference type="SwissPalm" id="Q96FQ6"/>
<dbReference type="BioMuta" id="S100A16"/>
<dbReference type="DMDM" id="20178113"/>
<dbReference type="jPOST" id="Q96FQ6"/>
<dbReference type="MassIVE" id="Q96FQ6"/>
<dbReference type="PaxDb" id="9606-ENSP00000357693"/>
<dbReference type="PeptideAtlas" id="Q96FQ6"/>
<dbReference type="ProteomicsDB" id="76549"/>
<dbReference type="TopDownProteomics" id="Q96FQ6"/>
<dbReference type="Antibodypedia" id="47029">
    <property type="antibodies" value="205 antibodies from 30 providers"/>
</dbReference>
<dbReference type="DNASU" id="140576"/>
<dbReference type="Ensembl" id="ENST00000368703.6">
    <property type="protein sequence ID" value="ENSP00000357692.1"/>
    <property type="gene ID" value="ENSG00000188643.11"/>
</dbReference>
<dbReference type="Ensembl" id="ENST00000368704.5">
    <property type="protein sequence ID" value="ENSP00000357693.1"/>
    <property type="gene ID" value="ENSG00000188643.11"/>
</dbReference>
<dbReference type="Ensembl" id="ENST00000368705.2">
    <property type="protein sequence ID" value="ENSP00000357694.1"/>
    <property type="gene ID" value="ENSG00000188643.11"/>
</dbReference>
<dbReference type="Ensembl" id="ENST00000368706.9">
    <property type="protein sequence ID" value="ENSP00000357695.3"/>
    <property type="gene ID" value="ENSG00000188643.11"/>
</dbReference>
<dbReference type="GeneID" id="140576"/>
<dbReference type="KEGG" id="hsa:140576"/>
<dbReference type="MANE-Select" id="ENST00000368706.9">
    <property type="protein sequence ID" value="ENSP00000357695.3"/>
    <property type="RefSeq nucleotide sequence ID" value="NM_080388.3"/>
    <property type="RefSeq protein sequence ID" value="NP_525127.1"/>
</dbReference>
<dbReference type="UCSC" id="uc001fcc.5">
    <property type="organism name" value="human"/>
</dbReference>
<dbReference type="AGR" id="HGNC:20441"/>
<dbReference type="CTD" id="140576"/>
<dbReference type="DisGeNET" id="140576"/>
<dbReference type="GeneCards" id="S100A16"/>
<dbReference type="HGNC" id="HGNC:20441">
    <property type="gene designation" value="S100A16"/>
</dbReference>
<dbReference type="HPA" id="ENSG00000188643">
    <property type="expression patterns" value="Tissue enhanced (esophagus)"/>
</dbReference>
<dbReference type="MIM" id="617437">
    <property type="type" value="gene"/>
</dbReference>
<dbReference type="neXtProt" id="NX_Q96FQ6"/>
<dbReference type="OpenTargets" id="ENSG00000188643"/>
<dbReference type="PharmGKB" id="PA134931606"/>
<dbReference type="VEuPathDB" id="HostDB:ENSG00000188643"/>
<dbReference type="eggNOG" id="ENOG502S6F9">
    <property type="taxonomic scope" value="Eukaryota"/>
</dbReference>
<dbReference type="GeneTree" id="ENSGT00390000000920"/>
<dbReference type="HOGENOM" id="CLU_138624_3_1_1"/>
<dbReference type="InParanoid" id="Q96FQ6"/>
<dbReference type="OMA" id="DCYTDLE"/>
<dbReference type="OrthoDB" id="8961427at2759"/>
<dbReference type="PAN-GO" id="Q96FQ6">
    <property type="GO annotations" value="5 GO annotations based on evolutionary models"/>
</dbReference>
<dbReference type="PhylomeDB" id="Q96FQ6"/>
<dbReference type="TreeFam" id="TF332727"/>
<dbReference type="PathwayCommons" id="Q96FQ6"/>
<dbReference type="SignaLink" id="Q96FQ6"/>
<dbReference type="BioGRID-ORCS" id="140576">
    <property type="hits" value="9 hits in 1155 CRISPR screens"/>
</dbReference>
<dbReference type="CD-CODE" id="91857CE7">
    <property type="entry name" value="Nucleolus"/>
</dbReference>
<dbReference type="ChiTaRS" id="S100A16">
    <property type="organism name" value="human"/>
</dbReference>
<dbReference type="EvolutionaryTrace" id="Q96FQ6"/>
<dbReference type="GeneWiki" id="S100A16"/>
<dbReference type="GenomeRNAi" id="140576"/>
<dbReference type="Pharos" id="Q96FQ6">
    <property type="development level" value="Tbio"/>
</dbReference>
<dbReference type="PRO" id="PR:Q96FQ6"/>
<dbReference type="Proteomes" id="UP000005640">
    <property type="component" value="Chromosome 1"/>
</dbReference>
<dbReference type="RNAct" id="Q96FQ6">
    <property type="molecule type" value="protein"/>
</dbReference>
<dbReference type="Bgee" id="ENSG00000188643">
    <property type="expression patterns" value="Expressed in lower esophagus mucosa and 179 other cell types or tissues"/>
</dbReference>
<dbReference type="GO" id="GO:0005829">
    <property type="term" value="C:cytosol"/>
    <property type="evidence" value="ECO:0000314"/>
    <property type="project" value="UniProtKB"/>
</dbReference>
<dbReference type="GO" id="GO:0070062">
    <property type="term" value="C:extracellular exosome"/>
    <property type="evidence" value="ECO:0007005"/>
    <property type="project" value="UniProtKB"/>
</dbReference>
<dbReference type="GO" id="GO:0005615">
    <property type="term" value="C:extracellular space"/>
    <property type="evidence" value="ECO:0000314"/>
    <property type="project" value="UniProtKB"/>
</dbReference>
<dbReference type="GO" id="GO:0005730">
    <property type="term" value="C:nucleolus"/>
    <property type="evidence" value="ECO:0000314"/>
    <property type="project" value="UniProtKB"/>
</dbReference>
<dbReference type="GO" id="GO:0005634">
    <property type="term" value="C:nucleus"/>
    <property type="evidence" value="ECO:0000318"/>
    <property type="project" value="GO_Central"/>
</dbReference>
<dbReference type="GO" id="GO:0048471">
    <property type="term" value="C:perinuclear region of cytoplasm"/>
    <property type="evidence" value="ECO:0000318"/>
    <property type="project" value="GO_Central"/>
</dbReference>
<dbReference type="GO" id="GO:0005886">
    <property type="term" value="C:plasma membrane"/>
    <property type="evidence" value="ECO:0000314"/>
    <property type="project" value="HPA"/>
</dbReference>
<dbReference type="GO" id="GO:0005509">
    <property type="term" value="F:calcium ion binding"/>
    <property type="evidence" value="ECO:0000314"/>
    <property type="project" value="UniProtKB"/>
</dbReference>
<dbReference type="GO" id="GO:0048306">
    <property type="term" value="F:calcium-dependent protein binding"/>
    <property type="evidence" value="ECO:0000318"/>
    <property type="project" value="GO_Central"/>
</dbReference>
<dbReference type="GO" id="GO:0042803">
    <property type="term" value="F:protein homodimerization activity"/>
    <property type="evidence" value="ECO:0000353"/>
    <property type="project" value="UniProtKB"/>
</dbReference>
<dbReference type="GO" id="GO:0003723">
    <property type="term" value="F:RNA binding"/>
    <property type="evidence" value="ECO:0007005"/>
    <property type="project" value="UniProtKB"/>
</dbReference>
<dbReference type="GO" id="GO:0051592">
    <property type="term" value="P:response to calcium ion"/>
    <property type="evidence" value="ECO:0007669"/>
    <property type="project" value="Ensembl"/>
</dbReference>
<dbReference type="CDD" id="cd05022">
    <property type="entry name" value="S-100A13"/>
    <property type="match status" value="1"/>
</dbReference>
<dbReference type="DisProt" id="DP02652"/>
<dbReference type="FunFam" id="1.10.238.10:FF:000192">
    <property type="entry name" value="Protein S100"/>
    <property type="match status" value="1"/>
</dbReference>
<dbReference type="Gene3D" id="1.10.238.10">
    <property type="entry name" value="EF-hand"/>
    <property type="match status" value="1"/>
</dbReference>
<dbReference type="InterPro" id="IPR011992">
    <property type="entry name" value="EF-hand-dom_pair"/>
</dbReference>
<dbReference type="InterPro" id="IPR018247">
    <property type="entry name" value="EF_Hand_1_Ca_BS"/>
</dbReference>
<dbReference type="InterPro" id="IPR002048">
    <property type="entry name" value="EF_hand_dom"/>
</dbReference>
<dbReference type="InterPro" id="IPR001751">
    <property type="entry name" value="S100/CaBP7/8-like_CS"/>
</dbReference>
<dbReference type="InterPro" id="IPR013787">
    <property type="entry name" value="S100_Ca-bd_sub"/>
</dbReference>
<dbReference type="PANTHER" id="PTHR11639:SF76">
    <property type="entry name" value="PROTEIN S100-A16"/>
    <property type="match status" value="1"/>
</dbReference>
<dbReference type="PANTHER" id="PTHR11639">
    <property type="entry name" value="S100 CALCIUM-BINDING PROTEIN"/>
    <property type="match status" value="1"/>
</dbReference>
<dbReference type="Pfam" id="PF01023">
    <property type="entry name" value="S_100"/>
    <property type="match status" value="1"/>
</dbReference>
<dbReference type="SMART" id="SM01394">
    <property type="entry name" value="S_100"/>
    <property type="match status" value="1"/>
</dbReference>
<dbReference type="SUPFAM" id="SSF47473">
    <property type="entry name" value="EF-hand"/>
    <property type="match status" value="1"/>
</dbReference>
<dbReference type="PROSITE" id="PS00018">
    <property type="entry name" value="EF_HAND_1"/>
    <property type="match status" value="1"/>
</dbReference>
<dbReference type="PROSITE" id="PS50222">
    <property type="entry name" value="EF_HAND_2"/>
    <property type="match status" value="1"/>
</dbReference>
<dbReference type="PROSITE" id="PS00303">
    <property type="entry name" value="S100_CABP"/>
    <property type="match status" value="1"/>
</dbReference>
<protein>
    <recommendedName>
        <fullName>Protein S100-A16</fullName>
    </recommendedName>
    <alternativeName>
        <fullName>Aging-associated gene 13 protein</fullName>
    </alternativeName>
    <alternativeName>
        <fullName>Protein S100-F</fullName>
    </alternativeName>
    <alternativeName>
        <fullName>S100 calcium-binding protein A16</fullName>
    </alternativeName>
</protein>
<proteinExistence type="evidence at protein level"/>
<reference key="1">
    <citation type="journal article" date="2004" name="Biochem. Biophys. Res. Commun.">
        <title>S100A16, a ubiquitously expressed EF-hand protein which is up-regulated in tumors.</title>
        <authorList>
            <person name="Marenholz I."/>
            <person name="Heizmann C.W."/>
        </authorList>
    </citation>
    <scope>NUCLEOTIDE SEQUENCE [GENOMIC DNA]</scope>
    <scope>TISSUE SPECIFICITY</scope>
</reference>
<reference key="2">
    <citation type="submission" date="2003-01" db="EMBL/GenBank/DDBJ databases">
        <authorList>
            <person name="Morita K."/>
        </authorList>
    </citation>
    <scope>NUCLEOTIDE SEQUENCE [MRNA]</scope>
    <source>
        <tissue>Keratinocyte</tissue>
    </source>
</reference>
<reference key="3">
    <citation type="submission" date="2004-09" db="EMBL/GenBank/DDBJ databases">
        <title>Identification of a human aging related gene.</title>
        <authorList>
            <person name="Kim J.W."/>
        </authorList>
    </citation>
    <scope>NUCLEOTIDE SEQUENCE [LARGE SCALE MRNA]</scope>
</reference>
<reference key="4">
    <citation type="journal article" date="2004" name="Nat. Genet.">
        <title>Complete sequencing and characterization of 21,243 full-length human cDNAs.</title>
        <authorList>
            <person name="Ota T."/>
            <person name="Suzuki Y."/>
            <person name="Nishikawa T."/>
            <person name="Otsuki T."/>
            <person name="Sugiyama T."/>
            <person name="Irie R."/>
            <person name="Wakamatsu A."/>
            <person name="Hayashi K."/>
            <person name="Sato H."/>
            <person name="Nagai K."/>
            <person name="Kimura K."/>
            <person name="Makita H."/>
            <person name="Sekine M."/>
            <person name="Obayashi M."/>
            <person name="Nishi T."/>
            <person name="Shibahara T."/>
            <person name="Tanaka T."/>
            <person name="Ishii S."/>
            <person name="Yamamoto J."/>
            <person name="Saito K."/>
            <person name="Kawai Y."/>
            <person name="Isono Y."/>
            <person name="Nakamura Y."/>
            <person name="Nagahari K."/>
            <person name="Murakami K."/>
            <person name="Yasuda T."/>
            <person name="Iwayanagi T."/>
            <person name="Wagatsuma M."/>
            <person name="Shiratori A."/>
            <person name="Sudo H."/>
            <person name="Hosoiri T."/>
            <person name="Kaku Y."/>
            <person name="Kodaira H."/>
            <person name="Kondo H."/>
            <person name="Sugawara M."/>
            <person name="Takahashi M."/>
            <person name="Kanda K."/>
            <person name="Yokoi T."/>
            <person name="Furuya T."/>
            <person name="Kikkawa E."/>
            <person name="Omura Y."/>
            <person name="Abe K."/>
            <person name="Kamihara K."/>
            <person name="Katsuta N."/>
            <person name="Sato K."/>
            <person name="Tanikawa M."/>
            <person name="Yamazaki M."/>
            <person name="Ninomiya K."/>
            <person name="Ishibashi T."/>
            <person name="Yamashita H."/>
            <person name="Murakawa K."/>
            <person name="Fujimori K."/>
            <person name="Tanai H."/>
            <person name="Kimata M."/>
            <person name="Watanabe M."/>
            <person name="Hiraoka S."/>
            <person name="Chiba Y."/>
            <person name="Ishida S."/>
            <person name="Ono Y."/>
            <person name="Takiguchi S."/>
            <person name="Watanabe S."/>
            <person name="Yosida M."/>
            <person name="Hotuta T."/>
            <person name="Kusano J."/>
            <person name="Kanehori K."/>
            <person name="Takahashi-Fujii A."/>
            <person name="Hara H."/>
            <person name="Tanase T.-O."/>
            <person name="Nomura Y."/>
            <person name="Togiya S."/>
            <person name="Komai F."/>
            <person name="Hara R."/>
            <person name="Takeuchi K."/>
            <person name="Arita M."/>
            <person name="Imose N."/>
            <person name="Musashino K."/>
            <person name="Yuuki H."/>
            <person name="Oshima A."/>
            <person name="Sasaki N."/>
            <person name="Aotsuka S."/>
            <person name="Yoshikawa Y."/>
            <person name="Matsunawa H."/>
            <person name="Ichihara T."/>
            <person name="Shiohata N."/>
            <person name="Sano S."/>
            <person name="Moriya S."/>
            <person name="Momiyama H."/>
            <person name="Satoh N."/>
            <person name="Takami S."/>
            <person name="Terashima Y."/>
            <person name="Suzuki O."/>
            <person name="Nakagawa S."/>
            <person name="Senoh A."/>
            <person name="Mizoguchi H."/>
            <person name="Goto Y."/>
            <person name="Shimizu F."/>
            <person name="Wakebe H."/>
            <person name="Hishigaki H."/>
            <person name="Watanabe T."/>
            <person name="Sugiyama A."/>
            <person name="Takemoto M."/>
            <person name="Kawakami B."/>
            <person name="Yamazaki M."/>
            <person name="Watanabe K."/>
            <person name="Kumagai A."/>
            <person name="Itakura S."/>
            <person name="Fukuzumi Y."/>
            <person name="Fujimori Y."/>
            <person name="Komiyama M."/>
            <person name="Tashiro H."/>
            <person name="Tanigami A."/>
            <person name="Fujiwara T."/>
            <person name="Ono T."/>
            <person name="Yamada K."/>
            <person name="Fujii Y."/>
            <person name="Ozaki K."/>
            <person name="Hirao M."/>
            <person name="Ohmori Y."/>
            <person name="Kawabata A."/>
            <person name="Hikiji T."/>
            <person name="Kobatake N."/>
            <person name="Inagaki H."/>
            <person name="Ikema Y."/>
            <person name="Okamoto S."/>
            <person name="Okitani R."/>
            <person name="Kawakami T."/>
            <person name="Noguchi S."/>
            <person name="Itoh T."/>
            <person name="Shigeta K."/>
            <person name="Senba T."/>
            <person name="Matsumura K."/>
            <person name="Nakajima Y."/>
            <person name="Mizuno T."/>
            <person name="Morinaga M."/>
            <person name="Sasaki M."/>
            <person name="Togashi T."/>
            <person name="Oyama M."/>
            <person name="Hata H."/>
            <person name="Watanabe M."/>
            <person name="Komatsu T."/>
            <person name="Mizushima-Sugano J."/>
            <person name="Satoh T."/>
            <person name="Shirai Y."/>
            <person name="Takahashi Y."/>
            <person name="Nakagawa K."/>
            <person name="Okumura K."/>
            <person name="Nagase T."/>
            <person name="Nomura N."/>
            <person name="Kikuchi H."/>
            <person name="Masuho Y."/>
            <person name="Yamashita R."/>
            <person name="Nakai K."/>
            <person name="Yada T."/>
            <person name="Nakamura Y."/>
            <person name="Ohara O."/>
            <person name="Isogai T."/>
            <person name="Sugano S."/>
        </authorList>
    </citation>
    <scope>NUCLEOTIDE SEQUENCE [LARGE SCALE MRNA]</scope>
    <source>
        <tissue>Kidney</tissue>
    </source>
</reference>
<reference key="5">
    <citation type="journal article" date="2006" name="Nature">
        <title>The DNA sequence and biological annotation of human chromosome 1.</title>
        <authorList>
            <person name="Gregory S.G."/>
            <person name="Barlow K.F."/>
            <person name="McLay K.E."/>
            <person name="Kaul R."/>
            <person name="Swarbreck D."/>
            <person name="Dunham A."/>
            <person name="Scott C.E."/>
            <person name="Howe K.L."/>
            <person name="Woodfine K."/>
            <person name="Spencer C.C.A."/>
            <person name="Jones M.C."/>
            <person name="Gillson C."/>
            <person name="Searle S."/>
            <person name="Zhou Y."/>
            <person name="Kokocinski F."/>
            <person name="McDonald L."/>
            <person name="Evans R."/>
            <person name="Phillips K."/>
            <person name="Atkinson A."/>
            <person name="Cooper R."/>
            <person name="Jones C."/>
            <person name="Hall R.E."/>
            <person name="Andrews T.D."/>
            <person name="Lloyd C."/>
            <person name="Ainscough R."/>
            <person name="Almeida J.P."/>
            <person name="Ambrose K.D."/>
            <person name="Anderson F."/>
            <person name="Andrew R.W."/>
            <person name="Ashwell R.I.S."/>
            <person name="Aubin K."/>
            <person name="Babbage A.K."/>
            <person name="Bagguley C.L."/>
            <person name="Bailey J."/>
            <person name="Beasley H."/>
            <person name="Bethel G."/>
            <person name="Bird C.P."/>
            <person name="Bray-Allen S."/>
            <person name="Brown J.Y."/>
            <person name="Brown A.J."/>
            <person name="Buckley D."/>
            <person name="Burton J."/>
            <person name="Bye J."/>
            <person name="Carder C."/>
            <person name="Chapman J.C."/>
            <person name="Clark S.Y."/>
            <person name="Clarke G."/>
            <person name="Clee C."/>
            <person name="Cobley V."/>
            <person name="Collier R.E."/>
            <person name="Corby N."/>
            <person name="Coville G.J."/>
            <person name="Davies J."/>
            <person name="Deadman R."/>
            <person name="Dunn M."/>
            <person name="Earthrowl M."/>
            <person name="Ellington A.G."/>
            <person name="Errington H."/>
            <person name="Frankish A."/>
            <person name="Frankland J."/>
            <person name="French L."/>
            <person name="Garner P."/>
            <person name="Garnett J."/>
            <person name="Gay L."/>
            <person name="Ghori M.R.J."/>
            <person name="Gibson R."/>
            <person name="Gilby L.M."/>
            <person name="Gillett W."/>
            <person name="Glithero R.J."/>
            <person name="Grafham D.V."/>
            <person name="Griffiths C."/>
            <person name="Griffiths-Jones S."/>
            <person name="Grocock R."/>
            <person name="Hammond S."/>
            <person name="Harrison E.S.I."/>
            <person name="Hart E."/>
            <person name="Haugen E."/>
            <person name="Heath P.D."/>
            <person name="Holmes S."/>
            <person name="Holt K."/>
            <person name="Howden P.J."/>
            <person name="Hunt A.R."/>
            <person name="Hunt S.E."/>
            <person name="Hunter G."/>
            <person name="Isherwood J."/>
            <person name="James R."/>
            <person name="Johnson C."/>
            <person name="Johnson D."/>
            <person name="Joy A."/>
            <person name="Kay M."/>
            <person name="Kershaw J.K."/>
            <person name="Kibukawa M."/>
            <person name="Kimberley A.M."/>
            <person name="King A."/>
            <person name="Knights A.J."/>
            <person name="Lad H."/>
            <person name="Laird G."/>
            <person name="Lawlor S."/>
            <person name="Leongamornlert D.A."/>
            <person name="Lloyd D.M."/>
            <person name="Loveland J."/>
            <person name="Lovell J."/>
            <person name="Lush M.J."/>
            <person name="Lyne R."/>
            <person name="Martin S."/>
            <person name="Mashreghi-Mohammadi M."/>
            <person name="Matthews L."/>
            <person name="Matthews N.S.W."/>
            <person name="McLaren S."/>
            <person name="Milne S."/>
            <person name="Mistry S."/>
            <person name="Moore M.J.F."/>
            <person name="Nickerson T."/>
            <person name="O'Dell C.N."/>
            <person name="Oliver K."/>
            <person name="Palmeiri A."/>
            <person name="Palmer S.A."/>
            <person name="Parker A."/>
            <person name="Patel D."/>
            <person name="Pearce A.V."/>
            <person name="Peck A.I."/>
            <person name="Pelan S."/>
            <person name="Phelps K."/>
            <person name="Phillimore B.J."/>
            <person name="Plumb R."/>
            <person name="Rajan J."/>
            <person name="Raymond C."/>
            <person name="Rouse G."/>
            <person name="Saenphimmachak C."/>
            <person name="Sehra H.K."/>
            <person name="Sheridan E."/>
            <person name="Shownkeen R."/>
            <person name="Sims S."/>
            <person name="Skuce C.D."/>
            <person name="Smith M."/>
            <person name="Steward C."/>
            <person name="Subramanian S."/>
            <person name="Sycamore N."/>
            <person name="Tracey A."/>
            <person name="Tromans A."/>
            <person name="Van Helmond Z."/>
            <person name="Wall M."/>
            <person name="Wallis J.M."/>
            <person name="White S."/>
            <person name="Whitehead S.L."/>
            <person name="Wilkinson J.E."/>
            <person name="Willey D.L."/>
            <person name="Williams H."/>
            <person name="Wilming L."/>
            <person name="Wray P.W."/>
            <person name="Wu Z."/>
            <person name="Coulson A."/>
            <person name="Vaudin M."/>
            <person name="Sulston J.E."/>
            <person name="Durbin R.M."/>
            <person name="Hubbard T."/>
            <person name="Wooster R."/>
            <person name="Dunham I."/>
            <person name="Carter N.P."/>
            <person name="McVean G."/>
            <person name="Ross M.T."/>
            <person name="Harrow J."/>
            <person name="Olson M.V."/>
            <person name="Beck S."/>
            <person name="Rogers J."/>
            <person name="Bentley D.R."/>
        </authorList>
    </citation>
    <scope>NUCLEOTIDE SEQUENCE [LARGE SCALE GENOMIC DNA]</scope>
</reference>
<reference key="6">
    <citation type="submission" date="2005-09" db="EMBL/GenBank/DDBJ databases">
        <authorList>
            <person name="Mural R.J."/>
            <person name="Istrail S."/>
            <person name="Sutton G.G."/>
            <person name="Florea L."/>
            <person name="Halpern A.L."/>
            <person name="Mobarry C.M."/>
            <person name="Lippert R."/>
            <person name="Walenz B."/>
            <person name="Shatkay H."/>
            <person name="Dew I."/>
            <person name="Miller J.R."/>
            <person name="Flanigan M.J."/>
            <person name="Edwards N.J."/>
            <person name="Bolanos R."/>
            <person name="Fasulo D."/>
            <person name="Halldorsson B.V."/>
            <person name="Hannenhalli S."/>
            <person name="Turner R."/>
            <person name="Yooseph S."/>
            <person name="Lu F."/>
            <person name="Nusskern D.R."/>
            <person name="Shue B.C."/>
            <person name="Zheng X.H."/>
            <person name="Zhong F."/>
            <person name="Delcher A.L."/>
            <person name="Huson D.H."/>
            <person name="Kravitz S.A."/>
            <person name="Mouchard L."/>
            <person name="Reinert K."/>
            <person name="Remington K.A."/>
            <person name="Clark A.G."/>
            <person name="Waterman M.S."/>
            <person name="Eichler E.E."/>
            <person name="Adams M.D."/>
            <person name="Hunkapiller M.W."/>
            <person name="Myers E.W."/>
            <person name="Venter J.C."/>
        </authorList>
    </citation>
    <scope>NUCLEOTIDE SEQUENCE [LARGE SCALE GENOMIC DNA]</scope>
</reference>
<reference key="7">
    <citation type="journal article" date="2004" name="Genome Res.">
        <title>The status, quality, and expansion of the NIH full-length cDNA project: the Mammalian Gene Collection (MGC).</title>
        <authorList>
            <consortium name="The MGC Project Team"/>
        </authorList>
    </citation>
    <scope>NUCLEOTIDE SEQUENCE [LARGE SCALE MRNA]</scope>
    <source>
        <tissue>Brain</tissue>
        <tissue>Cervix</tissue>
    </source>
</reference>
<reference key="8">
    <citation type="journal article" date="2006" name="J. Biol. Chem.">
        <title>S100A16, a novel calcium-binding protein of the EF-hand superfamily.</title>
        <authorList>
            <person name="Sturchler E."/>
            <person name="Cox J.A."/>
            <person name="Durussel I."/>
            <person name="Weibel M."/>
            <person name="Heizmann C.W."/>
        </authorList>
    </citation>
    <scope>FUNCTION</scope>
    <scope>SUBUNIT</scope>
    <scope>SUBCELLULAR LOCATION</scope>
    <scope>IDENTIFICATION BY MASS SPECTROMETRY</scope>
    <scope>CALCIUM-BINDING</scope>
    <scope>TISSUE SPECIFICITY</scope>
</reference>
<reference key="9">
    <citation type="journal article" date="2010" name="Sci. Signal.">
        <title>Quantitative phosphoproteomics reveals widespread full phosphorylation site occupancy during mitosis.</title>
        <authorList>
            <person name="Olsen J.V."/>
            <person name="Vermeulen M."/>
            <person name="Santamaria A."/>
            <person name="Kumar C."/>
            <person name="Miller M.L."/>
            <person name="Jensen L.J."/>
            <person name="Gnad F."/>
            <person name="Cox J."/>
            <person name="Jensen T.S."/>
            <person name="Nigg E.A."/>
            <person name="Brunak S."/>
            <person name="Mann M."/>
        </authorList>
    </citation>
    <scope>IDENTIFICATION BY MASS SPECTROMETRY [LARGE SCALE ANALYSIS]</scope>
    <source>
        <tissue>Cervix carcinoma</tissue>
    </source>
</reference>
<reference key="10">
    <citation type="journal article" date="2011" name="BMC Syst. Biol.">
        <title>Initial characterization of the human central proteome.</title>
        <authorList>
            <person name="Burkard T.R."/>
            <person name="Planyavsky M."/>
            <person name="Kaupe I."/>
            <person name="Breitwieser F.P."/>
            <person name="Buerckstuemmer T."/>
            <person name="Bennett K.L."/>
            <person name="Superti-Furga G."/>
            <person name="Colinge J."/>
        </authorList>
    </citation>
    <scope>IDENTIFICATION BY MASS SPECTROMETRY [LARGE SCALE ANALYSIS]</scope>
</reference>
<reference key="11">
    <citation type="journal article" date="2011" name="J. Biol. Inorg. Chem.">
        <title>Structural characterization of human S100A16, a low-affinity calcium binder.</title>
        <authorList>
            <person name="Babini E."/>
            <person name="Bertini I."/>
            <person name="Borsi V."/>
            <person name="Calderone V."/>
            <person name="Hu X."/>
            <person name="Luchinat C."/>
            <person name="Parigi G."/>
        </authorList>
    </citation>
    <scope>X-RAY CRYSTALLOGRAPHY (2.1 ANGSTROMS)</scope>
    <scope>STRUCTURE BY NMR</scope>
    <scope>SUBUNIT</scope>
    <scope>CALCIUM-BINDING DOMAIN</scope>
</reference>
<organism>
    <name type="scientific">Homo sapiens</name>
    <name type="common">Human</name>
    <dbReference type="NCBI Taxonomy" id="9606"/>
    <lineage>
        <taxon>Eukaryota</taxon>
        <taxon>Metazoa</taxon>
        <taxon>Chordata</taxon>
        <taxon>Craniata</taxon>
        <taxon>Vertebrata</taxon>
        <taxon>Euteleostomi</taxon>
        <taxon>Mammalia</taxon>
        <taxon>Eutheria</taxon>
        <taxon>Euarchontoglires</taxon>
        <taxon>Primates</taxon>
        <taxon>Haplorrhini</taxon>
        <taxon>Catarrhini</taxon>
        <taxon>Hominidae</taxon>
        <taxon>Homo</taxon>
    </lineage>
</organism>
<accession>Q96FQ6</accession>
<accession>A8K439</accession>
<accession>D3DV52</accession>
<accession>Q5RHS6</accession>
<keyword id="KW-0002">3D-structure</keyword>
<keyword id="KW-0106">Calcium</keyword>
<keyword id="KW-0963">Cytoplasm</keyword>
<keyword id="KW-0479">Metal-binding</keyword>
<keyword id="KW-0539">Nucleus</keyword>
<keyword id="KW-1267">Proteomics identification</keyword>
<keyword id="KW-1185">Reference proteome</keyword>
<keyword id="KW-0677">Repeat</keyword>
<keyword id="KW-0862">Zinc</keyword>